<gene>
    <name evidence="4" type="primary">DMP7</name>
    <name evidence="6" type="ordered locus">At4g28485</name>
</gene>
<proteinExistence type="evidence at transcript level"/>
<feature type="chain" id="PRO_0000441614" description="Protein DMP7" evidence="2">
    <location>
        <begin position="1"/>
        <end position="200"/>
    </location>
</feature>
<feature type="transmembrane region" description="Helical" evidence="2">
    <location>
        <begin position="37"/>
        <end position="57"/>
    </location>
</feature>
<feature type="transmembrane region" description="Helical" evidence="2">
    <location>
        <begin position="69"/>
        <end position="89"/>
    </location>
</feature>
<feature type="transmembrane region" description="Helical" evidence="2">
    <location>
        <begin position="129"/>
        <end position="149"/>
    </location>
</feature>
<feature type="transmembrane region" description="Helical" evidence="2">
    <location>
        <begin position="167"/>
        <end position="187"/>
    </location>
</feature>
<feature type="splice variant" id="VSP_059069" description="In isoform 2.">
    <original>RKTFKGTAHLSNLLPTGSVMSFQIMCPVLTHQGQCPTITSRWLTCFLVSLCAISCFLFSFTDSIRDPNGKV</original>
    <variation>SVPPSPVAGSPASSSPYAPSPASSSPLPTPLETQTA</variation>
    <location>
        <begin position="28"/>
        <end position="98"/>
    </location>
</feature>
<feature type="sequence conflict" description="In Ref. 4; AAY78804." evidence="5" ref="4">
    <original>K</original>
    <variation>Q</variation>
    <location>
        <position position="199"/>
    </location>
</feature>
<accession>Q5XV67</accession>
<accession>F4JLA4</accession>
<accession>Q4PSH9</accession>
<evidence type="ECO:0000250" key="1">
    <source>
        <dbReference type="UniProtKB" id="Q9LVF4"/>
    </source>
</evidence>
<evidence type="ECO:0000255" key="2"/>
<evidence type="ECO:0000269" key="3">
    <source>
    </source>
</evidence>
<evidence type="ECO:0000303" key="4">
    <source>
    </source>
</evidence>
<evidence type="ECO:0000305" key="5"/>
<evidence type="ECO:0000312" key="6">
    <source>
        <dbReference type="Araport" id="AT4G28485"/>
    </source>
</evidence>
<keyword id="KW-0025">Alternative splicing</keyword>
<keyword id="KW-0256">Endoplasmic reticulum</keyword>
<keyword id="KW-0472">Membrane</keyword>
<keyword id="KW-1185">Reference proteome</keyword>
<keyword id="KW-0812">Transmembrane</keyword>
<keyword id="KW-1133">Transmembrane helix</keyword>
<name>DMP7_ARATH</name>
<reference key="1">
    <citation type="journal article" date="1999" name="Nature">
        <title>Sequence and analysis of chromosome 4 of the plant Arabidopsis thaliana.</title>
        <authorList>
            <person name="Mayer K.F.X."/>
            <person name="Schueller C."/>
            <person name="Wambutt R."/>
            <person name="Murphy G."/>
            <person name="Volckaert G."/>
            <person name="Pohl T."/>
            <person name="Duesterhoeft A."/>
            <person name="Stiekema W."/>
            <person name="Entian K.-D."/>
            <person name="Terryn N."/>
            <person name="Harris B."/>
            <person name="Ansorge W."/>
            <person name="Brandt P."/>
            <person name="Grivell L.A."/>
            <person name="Rieger M."/>
            <person name="Weichselgartner M."/>
            <person name="de Simone V."/>
            <person name="Obermaier B."/>
            <person name="Mache R."/>
            <person name="Mueller M."/>
            <person name="Kreis M."/>
            <person name="Delseny M."/>
            <person name="Puigdomenech P."/>
            <person name="Watson M."/>
            <person name="Schmidtheini T."/>
            <person name="Reichert B."/>
            <person name="Portetelle D."/>
            <person name="Perez-Alonso M."/>
            <person name="Boutry M."/>
            <person name="Bancroft I."/>
            <person name="Vos P."/>
            <person name="Hoheisel J."/>
            <person name="Zimmermann W."/>
            <person name="Wedler H."/>
            <person name="Ridley P."/>
            <person name="Langham S.-A."/>
            <person name="McCullagh B."/>
            <person name="Bilham L."/>
            <person name="Robben J."/>
            <person name="van der Schueren J."/>
            <person name="Grymonprez B."/>
            <person name="Chuang Y.-J."/>
            <person name="Vandenbussche F."/>
            <person name="Braeken M."/>
            <person name="Weltjens I."/>
            <person name="Voet M."/>
            <person name="Bastiaens I."/>
            <person name="Aert R."/>
            <person name="Defoor E."/>
            <person name="Weitzenegger T."/>
            <person name="Bothe G."/>
            <person name="Ramsperger U."/>
            <person name="Hilbert H."/>
            <person name="Braun M."/>
            <person name="Holzer E."/>
            <person name="Brandt A."/>
            <person name="Peters S."/>
            <person name="van Staveren M."/>
            <person name="Dirkse W."/>
            <person name="Mooijman P."/>
            <person name="Klein Lankhorst R."/>
            <person name="Rose M."/>
            <person name="Hauf J."/>
            <person name="Koetter P."/>
            <person name="Berneiser S."/>
            <person name="Hempel S."/>
            <person name="Feldpausch M."/>
            <person name="Lamberth S."/>
            <person name="Van den Daele H."/>
            <person name="De Keyser A."/>
            <person name="Buysshaert C."/>
            <person name="Gielen J."/>
            <person name="Villarroel R."/>
            <person name="De Clercq R."/>
            <person name="van Montagu M."/>
            <person name="Rogers J."/>
            <person name="Cronin A."/>
            <person name="Quail M.A."/>
            <person name="Bray-Allen S."/>
            <person name="Clark L."/>
            <person name="Doggett J."/>
            <person name="Hall S."/>
            <person name="Kay M."/>
            <person name="Lennard N."/>
            <person name="McLay K."/>
            <person name="Mayes R."/>
            <person name="Pettett A."/>
            <person name="Rajandream M.A."/>
            <person name="Lyne M."/>
            <person name="Benes V."/>
            <person name="Rechmann S."/>
            <person name="Borkova D."/>
            <person name="Bloecker H."/>
            <person name="Scharfe M."/>
            <person name="Grimm M."/>
            <person name="Loehnert T.-H."/>
            <person name="Dose S."/>
            <person name="de Haan M."/>
            <person name="Maarse A.C."/>
            <person name="Schaefer M."/>
            <person name="Mueller-Auer S."/>
            <person name="Gabel C."/>
            <person name="Fuchs M."/>
            <person name="Fartmann B."/>
            <person name="Granderath K."/>
            <person name="Dauner D."/>
            <person name="Herzl A."/>
            <person name="Neumann S."/>
            <person name="Argiriou A."/>
            <person name="Vitale D."/>
            <person name="Liguori R."/>
            <person name="Piravandi E."/>
            <person name="Massenet O."/>
            <person name="Quigley F."/>
            <person name="Clabauld G."/>
            <person name="Muendlein A."/>
            <person name="Felber R."/>
            <person name="Schnabl S."/>
            <person name="Hiller R."/>
            <person name="Schmidt W."/>
            <person name="Lecharny A."/>
            <person name="Aubourg S."/>
            <person name="Chefdor F."/>
            <person name="Cooke R."/>
            <person name="Berger C."/>
            <person name="Monfort A."/>
            <person name="Casacuberta E."/>
            <person name="Gibbons T."/>
            <person name="Weber N."/>
            <person name="Vandenbol M."/>
            <person name="Bargues M."/>
            <person name="Terol J."/>
            <person name="Torres A."/>
            <person name="Perez-Perez A."/>
            <person name="Purnelle B."/>
            <person name="Bent E."/>
            <person name="Johnson S."/>
            <person name="Tacon D."/>
            <person name="Jesse T."/>
            <person name="Heijnen L."/>
            <person name="Schwarz S."/>
            <person name="Scholler P."/>
            <person name="Heber S."/>
            <person name="Francs P."/>
            <person name="Bielke C."/>
            <person name="Frishman D."/>
            <person name="Haase D."/>
            <person name="Lemcke K."/>
            <person name="Mewes H.-W."/>
            <person name="Stocker S."/>
            <person name="Zaccaria P."/>
            <person name="Bevan M."/>
            <person name="Wilson R.K."/>
            <person name="de la Bastide M."/>
            <person name="Habermann K."/>
            <person name="Parnell L."/>
            <person name="Dedhia N."/>
            <person name="Gnoj L."/>
            <person name="Schutz K."/>
            <person name="Huang E."/>
            <person name="Spiegel L."/>
            <person name="Sekhon M."/>
            <person name="Murray J."/>
            <person name="Sheet P."/>
            <person name="Cordes M."/>
            <person name="Abu-Threideh J."/>
            <person name="Stoneking T."/>
            <person name="Kalicki J."/>
            <person name="Graves T."/>
            <person name="Harmon G."/>
            <person name="Edwards J."/>
            <person name="Latreille P."/>
            <person name="Courtney L."/>
            <person name="Cloud J."/>
            <person name="Abbott A."/>
            <person name="Scott K."/>
            <person name="Johnson D."/>
            <person name="Minx P."/>
            <person name="Bentley D."/>
            <person name="Fulton B."/>
            <person name="Miller N."/>
            <person name="Greco T."/>
            <person name="Kemp K."/>
            <person name="Kramer J."/>
            <person name="Fulton L."/>
            <person name="Mardis E."/>
            <person name="Dante M."/>
            <person name="Pepin K."/>
            <person name="Hillier L.W."/>
            <person name="Nelson J."/>
            <person name="Spieth J."/>
            <person name="Ryan E."/>
            <person name="Andrews S."/>
            <person name="Geisel C."/>
            <person name="Layman D."/>
            <person name="Du H."/>
            <person name="Ali J."/>
            <person name="Berghoff A."/>
            <person name="Jones K."/>
            <person name="Drone K."/>
            <person name="Cotton M."/>
            <person name="Joshu C."/>
            <person name="Antonoiu B."/>
            <person name="Zidanic M."/>
            <person name="Strong C."/>
            <person name="Sun H."/>
            <person name="Lamar B."/>
            <person name="Yordan C."/>
            <person name="Ma P."/>
            <person name="Zhong J."/>
            <person name="Preston R."/>
            <person name="Vil D."/>
            <person name="Shekher M."/>
            <person name="Matero A."/>
            <person name="Shah R."/>
            <person name="Swaby I.K."/>
            <person name="O'Shaughnessy A."/>
            <person name="Rodriguez M."/>
            <person name="Hoffman J."/>
            <person name="Till S."/>
            <person name="Granat S."/>
            <person name="Shohdy N."/>
            <person name="Hasegawa A."/>
            <person name="Hameed A."/>
            <person name="Lodhi M."/>
            <person name="Johnson A."/>
            <person name="Chen E."/>
            <person name="Marra M.A."/>
            <person name="Martienssen R."/>
            <person name="McCombie W.R."/>
        </authorList>
    </citation>
    <scope>NUCLEOTIDE SEQUENCE [LARGE SCALE GENOMIC DNA]</scope>
    <source>
        <strain>cv. Columbia</strain>
    </source>
</reference>
<reference key="2">
    <citation type="journal article" date="2017" name="Plant J.">
        <title>Araport11: a complete reannotation of the Arabidopsis thaliana reference genome.</title>
        <authorList>
            <person name="Cheng C.Y."/>
            <person name="Krishnakumar V."/>
            <person name="Chan A.P."/>
            <person name="Thibaud-Nissen F."/>
            <person name="Schobel S."/>
            <person name="Town C.D."/>
        </authorList>
    </citation>
    <scope>GENOME REANNOTATION</scope>
    <source>
        <strain>cv. Columbia</strain>
    </source>
</reference>
<reference key="3">
    <citation type="journal article" date="2005" name="Plant Physiol.">
        <title>Analysis of the cDNAs of hypothetical genes on Arabidopsis chromosome 2 reveals numerous transcript variants.</title>
        <authorList>
            <person name="Xiao Y.-L."/>
            <person name="Smith S.R."/>
            <person name="Ishmael N."/>
            <person name="Redman J.C."/>
            <person name="Kumar N."/>
            <person name="Monaghan E.L."/>
            <person name="Ayele M."/>
            <person name="Haas B.J."/>
            <person name="Wu H.C."/>
            <person name="Town C.D."/>
        </authorList>
    </citation>
    <scope>NUCLEOTIDE SEQUENCE [LARGE SCALE MRNA] (ISOFORM 1)</scope>
    <source>
        <strain>cv. Columbia</strain>
    </source>
</reference>
<reference key="4">
    <citation type="journal article" date="2006" name="Plant Biotechnol. J.">
        <title>Simultaneous high-throughput recombinational cloning of open reading frames in closed and open configurations.</title>
        <authorList>
            <person name="Underwood B.A."/>
            <person name="Vanderhaeghen R."/>
            <person name="Whitford R."/>
            <person name="Town C.D."/>
            <person name="Hilson P."/>
        </authorList>
    </citation>
    <scope>NUCLEOTIDE SEQUENCE [LARGE SCALE MRNA] (ISOFORM 1)</scope>
    <source>
        <strain>cv. Columbia</strain>
    </source>
</reference>
<reference key="5">
    <citation type="journal article" date="2010" name="Plant Biol. 12 Suppl.">
        <title>Expression, localisation and phylogeny of a novel family of plant-specific membrane proteins.</title>
        <authorList>
            <person name="Kasaras A."/>
            <person name="Kunze R."/>
        </authorList>
    </citation>
    <scope>TISSUE SPECIFICITY</scope>
    <scope>DEVELOPMENTAL STAGE</scope>
    <scope>SUBCELLULAR LOCATION</scope>
    <scope>GENE FAMILY</scope>
    <scope>NOMENCLATURE</scope>
    <source>
        <strain>cv. Columbia</strain>
    </source>
</reference>
<protein>
    <recommendedName>
        <fullName evidence="4">Protein DMP7</fullName>
        <shortName evidence="4">AtDMP7</shortName>
    </recommendedName>
</protein>
<comment type="function">
    <text evidence="1">Involved in membrane remodeling.</text>
</comment>
<comment type="subcellular location">
    <subcellularLocation>
        <location evidence="3">Endoplasmic reticulum membrane</location>
        <topology evidence="2">Multi-pass membrane protein</topology>
    </subcellularLocation>
</comment>
<comment type="alternative products">
    <event type="alternative splicing"/>
    <isoform>
        <id>Q5XV67-1</id>
        <name>1</name>
        <sequence type="displayed"/>
    </isoform>
    <isoform>
        <id>Q5XV67-2</id>
        <name>2</name>
        <sequence type="described" ref="VSP_059069"/>
    </isoform>
</comment>
<comment type="tissue specificity">
    <text evidence="3">Expressed in leaves, stems, flowers, siliques and roots, especially in the vasculature.</text>
</comment>
<comment type="developmental stage">
    <text evidence="3">Accumulates in tissues undergoing dehiscence and abscission.</text>
</comment>
<comment type="similarity">
    <text evidence="5">Belongs to the plant DMP1 protein family.</text>
</comment>
<dbReference type="EMBL" id="AL161572">
    <property type="status" value="NOT_ANNOTATED_CDS"/>
    <property type="molecule type" value="Genomic_DNA"/>
</dbReference>
<dbReference type="EMBL" id="CP002687">
    <property type="protein sequence ID" value="AEE85493.1"/>
    <property type="molecule type" value="Genomic_DNA"/>
</dbReference>
<dbReference type="EMBL" id="CP002687">
    <property type="protein sequence ID" value="ANM66465.1"/>
    <property type="molecule type" value="Genomic_DNA"/>
</dbReference>
<dbReference type="EMBL" id="AY735655">
    <property type="protein sequence ID" value="AAU44525.1"/>
    <property type="molecule type" value="mRNA"/>
</dbReference>
<dbReference type="EMBL" id="DQ056657">
    <property type="protein sequence ID" value="AAY78804.1"/>
    <property type="molecule type" value="mRNA"/>
</dbReference>
<dbReference type="RefSeq" id="NP_001328357.1">
    <molecule id="Q5XV67-1"/>
    <property type="nucleotide sequence ID" value="NM_001341919.1"/>
</dbReference>
<dbReference type="RefSeq" id="NP_680746.1">
    <molecule id="Q5XV67-2"/>
    <property type="nucleotide sequence ID" value="NM_148380.2"/>
</dbReference>
<dbReference type="STRING" id="3702.Q5XV67"/>
<dbReference type="iPTMnet" id="Q5XV67"/>
<dbReference type="EnsemblPlants" id="AT4G28485.1">
    <molecule id="Q5XV67-2"/>
    <property type="protein sequence ID" value="AT4G28485.1"/>
    <property type="gene ID" value="AT4G28485"/>
</dbReference>
<dbReference type="EnsemblPlants" id="AT4G28485.2">
    <molecule id="Q5XV67-1"/>
    <property type="protein sequence ID" value="AT4G28485.2"/>
    <property type="gene ID" value="AT4G28485"/>
</dbReference>
<dbReference type="GeneID" id="828966"/>
<dbReference type="Gramene" id="AT4G28485.1">
    <molecule id="Q5XV67-2"/>
    <property type="protein sequence ID" value="AT4G28485.1"/>
    <property type="gene ID" value="AT4G28485"/>
</dbReference>
<dbReference type="Gramene" id="AT4G28485.2">
    <molecule id="Q5XV67-1"/>
    <property type="protein sequence ID" value="AT4G28485.2"/>
    <property type="gene ID" value="AT4G28485"/>
</dbReference>
<dbReference type="KEGG" id="ath:AT4G28485"/>
<dbReference type="Araport" id="AT4G28485"/>
<dbReference type="TAIR" id="AT4G28485">
    <property type="gene designation" value="DMP7"/>
</dbReference>
<dbReference type="InParanoid" id="Q5XV67"/>
<dbReference type="OMA" id="QCPTITS"/>
<dbReference type="PhylomeDB" id="Q5XV67"/>
<dbReference type="PRO" id="PR:Q5XV67"/>
<dbReference type="Proteomes" id="UP000006548">
    <property type="component" value="Chromosome 4"/>
</dbReference>
<dbReference type="ExpressionAtlas" id="Q5XV67">
    <property type="expression patterns" value="baseline and differential"/>
</dbReference>
<dbReference type="GO" id="GO:0005783">
    <property type="term" value="C:endoplasmic reticulum"/>
    <property type="evidence" value="ECO:0000314"/>
    <property type="project" value="UniProtKB"/>
</dbReference>
<dbReference type="GO" id="GO:0005789">
    <property type="term" value="C:endoplasmic reticulum membrane"/>
    <property type="evidence" value="ECO:0007669"/>
    <property type="project" value="UniProtKB-SubCell"/>
</dbReference>
<dbReference type="GO" id="GO:0009838">
    <property type="term" value="P:abscission"/>
    <property type="evidence" value="ECO:0000270"/>
    <property type="project" value="UniProtKB"/>
</dbReference>
<dbReference type="GO" id="GO:0009900">
    <property type="term" value="P:dehiscence"/>
    <property type="evidence" value="ECO:0000270"/>
    <property type="project" value="UniProtKB"/>
</dbReference>
<dbReference type="GO" id="GO:0010256">
    <property type="term" value="P:endomembrane system organization"/>
    <property type="evidence" value="ECO:0000250"/>
    <property type="project" value="UniProtKB"/>
</dbReference>
<dbReference type="InterPro" id="IPR007770">
    <property type="entry name" value="DMP"/>
</dbReference>
<dbReference type="PANTHER" id="PTHR31621">
    <property type="entry name" value="PROTEIN DMP3"/>
    <property type="match status" value="1"/>
</dbReference>
<dbReference type="PANTHER" id="PTHR31621:SF6">
    <property type="entry name" value="PROTEIN DMP7"/>
    <property type="match status" value="1"/>
</dbReference>
<dbReference type="Pfam" id="PF05078">
    <property type="entry name" value="DUF679"/>
    <property type="match status" value="1"/>
</dbReference>
<organism>
    <name type="scientific">Arabidopsis thaliana</name>
    <name type="common">Mouse-ear cress</name>
    <dbReference type="NCBI Taxonomy" id="3702"/>
    <lineage>
        <taxon>Eukaryota</taxon>
        <taxon>Viridiplantae</taxon>
        <taxon>Streptophyta</taxon>
        <taxon>Embryophyta</taxon>
        <taxon>Tracheophyta</taxon>
        <taxon>Spermatophyta</taxon>
        <taxon>Magnoliopsida</taxon>
        <taxon>eudicotyledons</taxon>
        <taxon>Gunneridae</taxon>
        <taxon>Pentapetalae</taxon>
        <taxon>rosids</taxon>
        <taxon>malvids</taxon>
        <taxon>Brassicales</taxon>
        <taxon>Brassicaceae</taxon>
        <taxon>Camelineae</taxon>
        <taxon>Arabidopsis</taxon>
    </lineage>
</organism>
<sequence length="200" mass="22318">MEETKQSLIASLPSAPRKPKSKVERVVRKTFKGTAHLSNLLPTGSVMSFQIMCPVLTHQGQCPTITSRWLTCFLVSLCAISCFLFSFTDSIRDPNGKVRYGLATWSGLLVMDGSITLTEEEKEKYKLKILDFIHAIMSMLVFFAVSMFDQNVTRCLFPVPSEETKEILTSLPFVIGVICGAFFLAFPTRRHGIGSPLTKE</sequence>